<reference key="1">
    <citation type="submission" date="1999-10" db="EMBL/GenBank/DDBJ databases">
        <title>A.oryzae histone H4 gene.</title>
        <authorList>
            <person name="Nakajima K."/>
            <person name="Sano M."/>
            <person name="Kunihiro S."/>
        </authorList>
    </citation>
    <scope>NUCLEOTIDE SEQUENCE [MRNA]</scope>
    <source>
        <strain>ATCC 42149 / RIB 40</strain>
    </source>
</reference>
<reference key="2">
    <citation type="journal article" date="2005" name="Nature">
        <title>Genome sequencing and analysis of Aspergillus oryzae.</title>
        <authorList>
            <person name="Machida M."/>
            <person name="Asai K."/>
            <person name="Sano M."/>
            <person name="Tanaka T."/>
            <person name="Kumagai T."/>
            <person name="Terai G."/>
            <person name="Kusumoto K."/>
            <person name="Arima T."/>
            <person name="Akita O."/>
            <person name="Kashiwagi Y."/>
            <person name="Abe K."/>
            <person name="Gomi K."/>
            <person name="Horiuchi H."/>
            <person name="Kitamoto K."/>
            <person name="Kobayashi T."/>
            <person name="Takeuchi M."/>
            <person name="Denning D.W."/>
            <person name="Galagan J.E."/>
            <person name="Nierman W.C."/>
            <person name="Yu J."/>
            <person name="Archer D.B."/>
            <person name="Bennett J.W."/>
            <person name="Bhatnagar D."/>
            <person name="Cleveland T.E."/>
            <person name="Fedorova N.D."/>
            <person name="Gotoh O."/>
            <person name="Horikawa H."/>
            <person name="Hosoyama A."/>
            <person name="Ichinomiya M."/>
            <person name="Igarashi R."/>
            <person name="Iwashita K."/>
            <person name="Juvvadi P.R."/>
            <person name="Kato M."/>
            <person name="Kato Y."/>
            <person name="Kin T."/>
            <person name="Kokubun A."/>
            <person name="Maeda H."/>
            <person name="Maeyama N."/>
            <person name="Maruyama J."/>
            <person name="Nagasaki H."/>
            <person name="Nakajima T."/>
            <person name="Oda K."/>
            <person name="Okada K."/>
            <person name="Paulsen I."/>
            <person name="Sakamoto K."/>
            <person name="Sawano T."/>
            <person name="Takahashi M."/>
            <person name="Takase K."/>
            <person name="Terabayashi Y."/>
            <person name="Wortman J.R."/>
            <person name="Yamada O."/>
            <person name="Yamagata Y."/>
            <person name="Anazawa H."/>
            <person name="Hata Y."/>
            <person name="Koide Y."/>
            <person name="Komori T."/>
            <person name="Koyama Y."/>
            <person name="Minetoki T."/>
            <person name="Suharnan S."/>
            <person name="Tanaka A."/>
            <person name="Isono K."/>
            <person name="Kuhara S."/>
            <person name="Ogasawara N."/>
            <person name="Kikuchi H."/>
        </authorList>
    </citation>
    <scope>NUCLEOTIDE SEQUENCE [LARGE SCALE GENOMIC DNA]</scope>
    <source>
        <strain>ATCC 42149 / RIB 40</strain>
    </source>
</reference>
<feature type="initiator methionine" description="Removed" evidence="1">
    <location>
        <position position="1"/>
    </location>
</feature>
<feature type="chain" id="PRO_0000158285" description="Histone H4">
    <location>
        <begin position="2"/>
        <end position="103"/>
    </location>
</feature>
<feature type="DNA-binding region">
    <location>
        <begin position="17"/>
        <end position="21"/>
    </location>
</feature>
<feature type="region of interest" description="Disordered" evidence="4">
    <location>
        <begin position="1"/>
        <end position="20"/>
    </location>
</feature>
<feature type="compositionally biased region" description="Gly residues" evidence="4">
    <location>
        <begin position="1"/>
        <end position="14"/>
    </location>
</feature>
<feature type="modified residue" description="N6-acetyl-N6-methyllysine; alternate" evidence="3">
    <location>
        <position position="6"/>
    </location>
</feature>
<feature type="modified residue" description="N6-methyllysine; alternate" evidence="2">
    <location>
        <position position="6"/>
    </location>
</feature>
<feature type="modified residue" description="N6-methyllysine; alternate" evidence="2">
    <location>
        <position position="9"/>
    </location>
</feature>
<feature type="modified residue" description="N6-acetyl-N6-methyllysine; alternate" evidence="3">
    <location>
        <position position="13"/>
    </location>
</feature>
<feature type="modified residue" description="N6-methyllysine; alternate" evidence="2">
    <location>
        <position position="13"/>
    </location>
</feature>
<feature type="modified residue" description="N6-glutaryllysine" evidence="2">
    <location>
        <position position="92"/>
    </location>
</feature>
<feature type="sequence conflict" description="In Ref. 1; BAB12238." evidence="5" ref="1">
    <original>S</original>
    <variation>T</variation>
    <location>
        <position position="61"/>
    </location>
</feature>
<feature type="sequence conflict" description="In Ref. 1; BAB12238." evidence="5" ref="1">
    <original>S</original>
    <variation>G</variation>
    <location>
        <position position="65"/>
    </location>
</feature>
<evidence type="ECO:0000250" key="1"/>
<evidence type="ECO:0000250" key="2">
    <source>
        <dbReference type="UniProtKB" id="P02309"/>
    </source>
</evidence>
<evidence type="ECO:0000250" key="3">
    <source>
        <dbReference type="UniProtKB" id="P62805"/>
    </source>
</evidence>
<evidence type="ECO:0000256" key="4">
    <source>
        <dbReference type="SAM" id="MobiDB-lite"/>
    </source>
</evidence>
<evidence type="ECO:0000305" key="5"/>
<organism>
    <name type="scientific">Aspergillus oryzae (strain ATCC 42149 / RIB 40)</name>
    <name type="common">Yellow koji mold</name>
    <dbReference type="NCBI Taxonomy" id="510516"/>
    <lineage>
        <taxon>Eukaryota</taxon>
        <taxon>Fungi</taxon>
        <taxon>Dikarya</taxon>
        <taxon>Ascomycota</taxon>
        <taxon>Pezizomycotina</taxon>
        <taxon>Eurotiomycetes</taxon>
        <taxon>Eurotiomycetidae</taxon>
        <taxon>Eurotiales</taxon>
        <taxon>Aspergillaceae</taxon>
        <taxon>Aspergillus</taxon>
        <taxon>Aspergillus subgen. Circumdati</taxon>
    </lineage>
</organism>
<proteinExistence type="inferred from homology"/>
<dbReference type="EMBL" id="AB033943">
    <property type="protein sequence ID" value="BAB12238.1"/>
    <property type="molecule type" value="mRNA"/>
</dbReference>
<dbReference type="EMBL" id="BA000051">
    <property type="protein sequence ID" value="BAE59675.1"/>
    <property type="molecule type" value="Genomic_DNA"/>
</dbReference>
<dbReference type="RefSeq" id="XP_001821677.1">
    <property type="nucleotide sequence ID" value="XM_001821625.2"/>
</dbReference>
<dbReference type="SMR" id="Q76MU7"/>
<dbReference type="STRING" id="510516.Q76MU7"/>
<dbReference type="EnsemblFungi" id="BAE60666">
    <property type="protein sequence ID" value="BAE60666"/>
    <property type="gene ID" value="AO090012000496"/>
</dbReference>
<dbReference type="GeneID" id="5993705"/>
<dbReference type="KEGG" id="aor:AO090026000189"/>
<dbReference type="VEuPathDB" id="FungiDB:AO090012000496"/>
<dbReference type="HOGENOM" id="CLU_109117_2_3_1"/>
<dbReference type="OMA" id="XRISAMI"/>
<dbReference type="OrthoDB" id="10472at5052"/>
<dbReference type="Proteomes" id="UP000006564">
    <property type="component" value="Chromosome 3"/>
</dbReference>
<dbReference type="GO" id="GO:0000786">
    <property type="term" value="C:nucleosome"/>
    <property type="evidence" value="ECO:0007669"/>
    <property type="project" value="UniProtKB-KW"/>
</dbReference>
<dbReference type="GO" id="GO:0005634">
    <property type="term" value="C:nucleus"/>
    <property type="evidence" value="ECO:0007669"/>
    <property type="project" value="UniProtKB-SubCell"/>
</dbReference>
<dbReference type="GO" id="GO:0003677">
    <property type="term" value="F:DNA binding"/>
    <property type="evidence" value="ECO:0007669"/>
    <property type="project" value="UniProtKB-KW"/>
</dbReference>
<dbReference type="GO" id="GO:0046982">
    <property type="term" value="F:protein heterodimerization activity"/>
    <property type="evidence" value="ECO:0007669"/>
    <property type="project" value="InterPro"/>
</dbReference>
<dbReference type="GO" id="GO:0030527">
    <property type="term" value="F:structural constituent of chromatin"/>
    <property type="evidence" value="ECO:0007669"/>
    <property type="project" value="InterPro"/>
</dbReference>
<dbReference type="CDD" id="cd22912">
    <property type="entry name" value="HFD_H4"/>
    <property type="match status" value="1"/>
</dbReference>
<dbReference type="FunFam" id="1.10.20.10:FF:000007">
    <property type="entry name" value="Histone H4"/>
    <property type="match status" value="1"/>
</dbReference>
<dbReference type="Gene3D" id="1.10.20.10">
    <property type="entry name" value="Histone, subunit A"/>
    <property type="match status" value="1"/>
</dbReference>
<dbReference type="InterPro" id="IPR035425">
    <property type="entry name" value="CENP-T/H4_C"/>
</dbReference>
<dbReference type="InterPro" id="IPR009072">
    <property type="entry name" value="Histone-fold"/>
</dbReference>
<dbReference type="InterPro" id="IPR001951">
    <property type="entry name" value="Histone_H4"/>
</dbReference>
<dbReference type="InterPro" id="IPR019809">
    <property type="entry name" value="Histone_H4_CS"/>
</dbReference>
<dbReference type="PANTHER" id="PTHR10484">
    <property type="entry name" value="HISTONE H4"/>
    <property type="match status" value="1"/>
</dbReference>
<dbReference type="Pfam" id="PF15511">
    <property type="entry name" value="CENP-T_C"/>
    <property type="match status" value="1"/>
</dbReference>
<dbReference type="PRINTS" id="PR00623">
    <property type="entry name" value="HISTONEH4"/>
</dbReference>
<dbReference type="SMART" id="SM00417">
    <property type="entry name" value="H4"/>
    <property type="match status" value="1"/>
</dbReference>
<dbReference type="SUPFAM" id="SSF47113">
    <property type="entry name" value="Histone-fold"/>
    <property type="match status" value="1"/>
</dbReference>
<dbReference type="PROSITE" id="PS00047">
    <property type="entry name" value="HISTONE_H4"/>
    <property type="match status" value="1"/>
</dbReference>
<accession>Q76MU7</accession>
<accession>Q2UFJ0</accession>
<sequence>MSGRGKGGKGLGKGGAKRHRKILRDNIQGITKPAIRRLARRGGVKRISAMIYEETRGVLKSFLESVIRDAVTYTEHAKRKTVTSLDVVYALKRQGRTLYGFGG</sequence>
<comment type="function">
    <text>Core component of nucleosome. Nucleosomes wrap and compact DNA into chromatin, limiting DNA accessibility to the cellular machineries which require DNA as a template. Histones thereby play a central role in transcription regulation, DNA repair, DNA replication and chromosomal stability. DNA accessibility is regulated via a complex set of post-translational modifications of histones, also called histone code, and nucleosome remodeling.</text>
</comment>
<comment type="subunit">
    <text>The nucleosome is a histone octamer containing two molecules each of H2A, H2B, H3 and H4 assembled in one H3-H4 heterotetramer and two H2A-H2B heterodimers. The octamer wraps approximately 147 bp of DNA.</text>
</comment>
<comment type="subcellular location">
    <subcellularLocation>
        <location evidence="1">Nucleus</location>
    </subcellularLocation>
    <subcellularLocation>
        <location evidence="1">Chromosome</location>
    </subcellularLocation>
</comment>
<comment type="PTM">
    <text evidence="2">Glutarylation at Lys-92 (H4K91glu) destabilizes nucleosomes by promoting dissociation of the H2A-H2B dimers from nucleosomes.</text>
</comment>
<comment type="similarity">
    <text evidence="5">Belongs to the histone H4 family.</text>
</comment>
<protein>
    <recommendedName>
        <fullName>Histone H4</fullName>
    </recommendedName>
</protein>
<name>H4_ASPOR</name>
<gene>
    <name type="primary">hhfA</name>
    <name type="ORF">AO090026000189</name>
</gene>
<keyword id="KW-0007">Acetylation</keyword>
<keyword id="KW-0158">Chromosome</keyword>
<keyword id="KW-0238">DNA-binding</keyword>
<keyword id="KW-0488">Methylation</keyword>
<keyword id="KW-0544">Nucleosome core</keyword>
<keyword id="KW-0539">Nucleus</keyword>
<keyword id="KW-1185">Reference proteome</keyword>